<evidence type="ECO:0000250" key="1">
    <source>
        <dbReference type="UniProtKB" id="Q15042"/>
    </source>
</evidence>
<evidence type="ECO:0000250" key="2">
    <source>
        <dbReference type="UniProtKB" id="Q5U1Z0"/>
    </source>
</evidence>
<evidence type="ECO:0000250" key="3">
    <source>
        <dbReference type="UniProtKB" id="Q8BMG7"/>
    </source>
</evidence>
<evidence type="ECO:0000256" key="4">
    <source>
        <dbReference type="SAM" id="MobiDB-lite"/>
    </source>
</evidence>
<evidence type="ECO:0000269" key="5">
    <source>
    </source>
</evidence>
<evidence type="ECO:0000269" key="6">
    <source>
    </source>
</evidence>
<evidence type="ECO:0000269" key="7">
    <source>
    </source>
</evidence>
<evidence type="ECO:0000269" key="8">
    <source>
    </source>
</evidence>
<evidence type="ECO:0000269" key="9">
    <source>
    </source>
</evidence>
<evidence type="ECO:0000269" key="10">
    <source>
    </source>
</evidence>
<evidence type="ECO:0000269" key="11">
    <source>
    </source>
</evidence>
<evidence type="ECO:0000303" key="12">
    <source>
    </source>
</evidence>
<evidence type="ECO:0000305" key="13"/>
<evidence type="ECO:0000305" key="14">
    <source>
    </source>
</evidence>
<evidence type="ECO:0000312" key="15">
    <source>
        <dbReference type="HGNC" id="HGNC:17168"/>
    </source>
</evidence>
<evidence type="ECO:0007744" key="16">
    <source>
    </source>
</evidence>
<evidence type="ECO:0007744" key="17">
    <source>
    </source>
</evidence>
<evidence type="ECO:0007744" key="18">
    <source>
    </source>
</evidence>
<evidence type="ECO:0007744" key="19">
    <source>
    </source>
</evidence>
<organism>
    <name type="scientific">Homo sapiens</name>
    <name type="common">Human</name>
    <dbReference type="NCBI Taxonomy" id="9606"/>
    <lineage>
        <taxon>Eukaryota</taxon>
        <taxon>Metazoa</taxon>
        <taxon>Chordata</taxon>
        <taxon>Craniata</taxon>
        <taxon>Vertebrata</taxon>
        <taxon>Euteleostomi</taxon>
        <taxon>Mammalia</taxon>
        <taxon>Eutheria</taxon>
        <taxon>Euarchontoglires</taxon>
        <taxon>Primates</taxon>
        <taxon>Haplorrhini</taxon>
        <taxon>Catarrhini</taxon>
        <taxon>Hominidae</taxon>
        <taxon>Homo</taxon>
    </lineage>
</organism>
<gene>
    <name evidence="15" type="primary">RAB3GAP2</name>
    <name type="synonym">KIAA0839</name>
</gene>
<keyword id="KW-0002">3D-structure</keyword>
<keyword id="KW-0025">Alternative splicing</keyword>
<keyword id="KW-0898">Cataract</keyword>
<keyword id="KW-0963">Cytoplasm</keyword>
<keyword id="KW-0225">Disease variant</keyword>
<keyword id="KW-0256">Endoplasmic reticulum</keyword>
<keyword id="KW-0343">GTPase activation</keyword>
<keyword id="KW-0991">Intellectual disability</keyword>
<keyword id="KW-0597">Phosphoprotein</keyword>
<keyword id="KW-1267">Proteomics identification</keyword>
<keyword id="KW-1185">Reference proteome</keyword>
<accession>Q9H2M9</accession>
<accession>A6H8V0</accession>
<accession>O75872</accession>
<accession>Q9HAB0</accession>
<accession>Q9UFJ7</accession>
<accession>Q9UQ15</accession>
<comment type="function">
    <text evidence="1 9 10 11">Regulatory subunit of the Rab3 GTPase-activating (Rab3GAP) complex composed of RAB3GAP1 and RAB3GAP2, which has GTPase-activating protein (GAP) activity towards various Rab3 subfamily members (RAB3A, RAB3B, RAB3C and RAB3D), RAB5A and RAB43, and guanine nucleotide exchange factor (GEF) activity towards RAB18 (PubMed:24891604, PubMed:9733780). As part of the Rab3GAP complex, acts as a GAP for Rab3 proteins by converting active RAB3-GTP to the inactive form RAB3-GDP (By similarity). Rab3 proteins are involved in regulated exocytosis of neurotransmitters and hormones (By similarity). The Rab3GAP complex acts as a GEF for RAB18 by promoting the conversion of inactive RAB18-GDP to the active form RAB18-GTP (PubMed:24891604). Recruits and stabilizes RAB18 at the cis-Golgi membrane in human fibroblasts where RAB18 is most likely activated (PubMed:26063829). Also involved in RAB18 recruitment at the endoplasmic reticulum (ER) membrane where it maintains proper ER structure (PubMed:24891604). Required for normal eye and brain development (By similarity). May participate in neurodevelopmental processes such as proliferation, migration and differentiation before synapse formation, and non-synaptic vesicular release of neurotransmitters (By similarity).</text>
</comment>
<comment type="subunit">
    <text evidence="2 7">The Rab3 GTPase-activating complex is a heterodimer composed of RAB3GAP1 and RAB3GAP2 (By similarity). The Rab3 GTPase-activating complex interacts with DMXL2 (By similarity). Interacts with LMAN1 (PubMed:22337587).</text>
</comment>
<comment type="subcellular location">
    <subcellularLocation>
        <location evidence="2">Cytoplasm</location>
    </subcellularLocation>
    <subcellularLocation>
        <location evidence="14">Endoplasmic reticulum</location>
    </subcellularLocation>
    <text evidence="2">In neurons, it is enriched in the synaptic soluble fraction.</text>
</comment>
<comment type="alternative products">
    <event type="alternative splicing"/>
    <isoform>
        <id>Q9H2M9-1</id>
        <name>1</name>
        <sequence type="displayed"/>
    </isoform>
    <isoform>
        <id>Q9H2M9-2</id>
        <name>2</name>
        <sequence type="described" ref="VSP_013311 VSP_013312"/>
    </isoform>
</comment>
<comment type="tissue specificity">
    <text evidence="11">Ubiquitous.</text>
</comment>
<comment type="disease" evidence="5 8 9">
    <disease id="DI-01940">
        <name>Martsolf syndrome 1</name>
        <acronym>MARTS1</acronym>
        <description>An autosomal recessive disease characterized by congenital cataracts, intellectual disability, and hypogonadism.</description>
        <dbReference type="MIM" id="212720"/>
    </disease>
    <text>The disease is caused by variants affecting the gene represented in this entry.</text>
</comment>
<comment type="disease" evidence="6">
    <disease id="DI-03228">
        <name>Warburg micro syndrome 2</name>
        <acronym>WARBM2</acronym>
        <description>A rare syndrome characterized by microcephaly, microphthalmia, microcornia, congenital cataracts, optic atrophy, cortical dysplasia, in particular corpus callosum hypoplasia, severe intellectual disability, spastic diplegia, and hypogonadism.</description>
        <dbReference type="MIM" id="614225"/>
    </disease>
    <text>The disease is caused by variants affecting the gene represented in this entry.</text>
</comment>
<comment type="similarity">
    <text evidence="13">Belongs to the Rab3-GAP regulatory subunit family.</text>
</comment>
<sequence length="1393" mass="155985">MACSIVQFCYFQDLQAARDFLFPHLREEILSGALRRDPSKSTDWEDDGWGAWEENEPQEPEEEGNTCKTQKTSWLQDCVLSLSPTNDLMVIAREQKAVFLVPKWKYSDKGKEEMQFAVGWSGSLNVEEGECVTSALCIPLASQKRSSTGRPDWTCIVVGFTSGYVRFYTENGVLLLAQLLNEDPVLQLKCRTYEIPRHPGVTEQNEELSILYPAAIVTIDGFSLFQSLRACRNQVAKAAASGNENIQPPPLAYKKWGLQDIDTIIDHASVGIMTLSPFDQMKTASNIGGFNAAIKNSPPAMSQYITVGSNPFTGFFYALEGSTQPLLSHVALAVASKLTSALFNAASGWLGWKSKHEEEAVQKQKPKVEPATPLAVRFGLPDSRRHGESICLSPCNTLAAVTDDFGRVILLDVARGIAIRMWKGYRDAQIGWIQTVEDLHERVPEKADFSPFGNSQGPSRVAQFLVIYAPRRGILEVWSTQQGPRVGAFNVGKHCRLLYPGYKIMGLNNVTSQSWQPQTYQICLVDPVSGSVKTVNVPFHLALSDKKSERAKDMHLVKKLAALLKTKSPNLDLVETEIKELILDIKYPATKKQALESILASERLPFSCLRNITQTLMDTLKSQELESVDEGLLQFCANKLKLLQLYESVSQLNSLDFHLDTPFSDNDLALLLRLDEKELLKLQALLEKYKQENTRTNVRFSDDKDGVLPVKTFLEYLEYEKDVLNIKKISEEEYVALGSFFFWKCLHGESSTEDMCHTLESAGLSPQLLLSLLLSVWLSKEKDILDKPQSICCLHTMLSLLSKMKVAIDETWDSQSVSPWWQQMRTACIQSENNGAALLSAHVGHSVAAQISNNMTEKKFSQTVLGADSEALTDSWEALSLDTEYWKLLLKQLEDCLILQTLLHSKGNTQTSKVSSLQAEPLPRLSVKKLLEGGKGGIADSVAKWIFKQDFSPEVLKLANEERDAENPDEPKEGVNRSFLEVSEMEMDLGAIPDLLHLAYEQFPCSLELDVLHAHCCWEYVVQWNKDPEEARFFVRSIEHLKQIFNAHVQNGIALMMWNTFLVKRFSAATYLMDKVGKSPKDRLCRRDVGMSDTAMTSFLGSCLDLLQILMEADVSRDEIQVPVLDTEDAWLSVEGPISIVELALEQKHIHYPLVEHHSILCSILYAVMRFSLKTVKPLSLFDSKGKNAFFKDLTSIQLLPSGEMDPNFISVRQQFLLKVVSAAVQAQHSATKVKDPTEEATPTPFGKDQDWPALAVDLAHHLQVSEDVVRRHYVGELYNYGVDHLGEEAILQVHDKEVLASQLLVLTGQRLAHALLHTQTKEGMELLARLPPTLCTWLKAMDPQDLQNTEVPIATTAKLVNKVIELLPEKHGQYGLALHLIEAVEAISLPSL</sequence>
<name>RBGPR_HUMAN</name>
<reference key="1">
    <citation type="journal article" date="1998" name="J. Biol. Chem.">
        <title>Molecular cloning and characterization of the noncatalytic subunit of the Rab3 subfamily-specific GTPase-activating protein.</title>
        <authorList>
            <person name="Nagano F."/>
            <person name="Sasaki T."/>
            <person name="Fukui K."/>
            <person name="Asakura T."/>
            <person name="Imazumi K."/>
            <person name="Takai Y."/>
        </authorList>
    </citation>
    <scope>NUCLEOTIDE SEQUENCE [MRNA] (ISOFORM 1)</scope>
    <scope>FUNCTION</scope>
    <scope>TISSUE SPECIFICITY</scope>
    <source>
        <tissue>Brain</tissue>
    </source>
</reference>
<reference key="2">
    <citation type="submission" date="2000-05" db="EMBL/GenBank/DDBJ databases">
        <authorList>
            <person name="Xu X."/>
            <person name="Yang Y."/>
            <person name="Gao G."/>
            <person name="Xiao H."/>
            <person name="Chen Z."/>
            <person name="Han Z."/>
        </authorList>
    </citation>
    <scope>NUCLEOTIDE SEQUENCE [MRNA] (ISOFORM 1)</scope>
    <source>
        <tissue>Dendritic cell</tissue>
    </source>
</reference>
<reference key="3">
    <citation type="journal article" date="1998" name="DNA Res.">
        <title>Prediction of the coding sequences of unidentified human genes. XII. The complete sequences of 100 new cDNA clones from brain which code for large proteins in vitro.</title>
        <authorList>
            <person name="Nagase T."/>
            <person name="Ishikawa K."/>
            <person name="Suyama M."/>
            <person name="Kikuno R."/>
            <person name="Hirosawa M."/>
            <person name="Miyajima N."/>
            <person name="Tanaka A."/>
            <person name="Kotani H."/>
            <person name="Nomura N."/>
            <person name="Ohara O."/>
        </authorList>
    </citation>
    <scope>NUCLEOTIDE SEQUENCE [LARGE SCALE MRNA] (ISOFORM 1)</scope>
    <source>
        <tissue>Brain</tissue>
    </source>
</reference>
<reference key="4">
    <citation type="journal article" date="2002" name="DNA Res.">
        <title>Construction of expression-ready cDNA clones for KIAA genes: manual curation of 330 KIAA cDNA clones.</title>
        <authorList>
            <person name="Nakajima D."/>
            <person name="Okazaki N."/>
            <person name="Yamakawa H."/>
            <person name="Kikuno R."/>
            <person name="Ohara O."/>
            <person name="Nagase T."/>
        </authorList>
    </citation>
    <scope>SEQUENCE REVISION</scope>
</reference>
<reference key="5">
    <citation type="journal article" date="2004" name="Nat. Genet.">
        <title>Complete sequencing and characterization of 21,243 full-length human cDNAs.</title>
        <authorList>
            <person name="Ota T."/>
            <person name="Suzuki Y."/>
            <person name="Nishikawa T."/>
            <person name="Otsuki T."/>
            <person name="Sugiyama T."/>
            <person name="Irie R."/>
            <person name="Wakamatsu A."/>
            <person name="Hayashi K."/>
            <person name="Sato H."/>
            <person name="Nagai K."/>
            <person name="Kimura K."/>
            <person name="Makita H."/>
            <person name="Sekine M."/>
            <person name="Obayashi M."/>
            <person name="Nishi T."/>
            <person name="Shibahara T."/>
            <person name="Tanaka T."/>
            <person name="Ishii S."/>
            <person name="Yamamoto J."/>
            <person name="Saito K."/>
            <person name="Kawai Y."/>
            <person name="Isono Y."/>
            <person name="Nakamura Y."/>
            <person name="Nagahari K."/>
            <person name="Murakami K."/>
            <person name="Yasuda T."/>
            <person name="Iwayanagi T."/>
            <person name="Wagatsuma M."/>
            <person name="Shiratori A."/>
            <person name="Sudo H."/>
            <person name="Hosoiri T."/>
            <person name="Kaku Y."/>
            <person name="Kodaira H."/>
            <person name="Kondo H."/>
            <person name="Sugawara M."/>
            <person name="Takahashi M."/>
            <person name="Kanda K."/>
            <person name="Yokoi T."/>
            <person name="Furuya T."/>
            <person name="Kikkawa E."/>
            <person name="Omura Y."/>
            <person name="Abe K."/>
            <person name="Kamihara K."/>
            <person name="Katsuta N."/>
            <person name="Sato K."/>
            <person name="Tanikawa M."/>
            <person name="Yamazaki M."/>
            <person name="Ninomiya K."/>
            <person name="Ishibashi T."/>
            <person name="Yamashita H."/>
            <person name="Murakawa K."/>
            <person name="Fujimori K."/>
            <person name="Tanai H."/>
            <person name="Kimata M."/>
            <person name="Watanabe M."/>
            <person name="Hiraoka S."/>
            <person name="Chiba Y."/>
            <person name="Ishida S."/>
            <person name="Ono Y."/>
            <person name="Takiguchi S."/>
            <person name="Watanabe S."/>
            <person name="Yosida M."/>
            <person name="Hotuta T."/>
            <person name="Kusano J."/>
            <person name="Kanehori K."/>
            <person name="Takahashi-Fujii A."/>
            <person name="Hara H."/>
            <person name="Tanase T.-O."/>
            <person name="Nomura Y."/>
            <person name="Togiya S."/>
            <person name="Komai F."/>
            <person name="Hara R."/>
            <person name="Takeuchi K."/>
            <person name="Arita M."/>
            <person name="Imose N."/>
            <person name="Musashino K."/>
            <person name="Yuuki H."/>
            <person name="Oshima A."/>
            <person name="Sasaki N."/>
            <person name="Aotsuka S."/>
            <person name="Yoshikawa Y."/>
            <person name="Matsunawa H."/>
            <person name="Ichihara T."/>
            <person name="Shiohata N."/>
            <person name="Sano S."/>
            <person name="Moriya S."/>
            <person name="Momiyama H."/>
            <person name="Satoh N."/>
            <person name="Takami S."/>
            <person name="Terashima Y."/>
            <person name="Suzuki O."/>
            <person name="Nakagawa S."/>
            <person name="Senoh A."/>
            <person name="Mizoguchi H."/>
            <person name="Goto Y."/>
            <person name="Shimizu F."/>
            <person name="Wakebe H."/>
            <person name="Hishigaki H."/>
            <person name="Watanabe T."/>
            <person name="Sugiyama A."/>
            <person name="Takemoto M."/>
            <person name="Kawakami B."/>
            <person name="Yamazaki M."/>
            <person name="Watanabe K."/>
            <person name="Kumagai A."/>
            <person name="Itakura S."/>
            <person name="Fukuzumi Y."/>
            <person name="Fujimori Y."/>
            <person name="Komiyama M."/>
            <person name="Tashiro H."/>
            <person name="Tanigami A."/>
            <person name="Fujiwara T."/>
            <person name="Ono T."/>
            <person name="Yamada K."/>
            <person name="Fujii Y."/>
            <person name="Ozaki K."/>
            <person name="Hirao M."/>
            <person name="Ohmori Y."/>
            <person name="Kawabata A."/>
            <person name="Hikiji T."/>
            <person name="Kobatake N."/>
            <person name="Inagaki H."/>
            <person name="Ikema Y."/>
            <person name="Okamoto S."/>
            <person name="Okitani R."/>
            <person name="Kawakami T."/>
            <person name="Noguchi S."/>
            <person name="Itoh T."/>
            <person name="Shigeta K."/>
            <person name="Senba T."/>
            <person name="Matsumura K."/>
            <person name="Nakajima Y."/>
            <person name="Mizuno T."/>
            <person name="Morinaga M."/>
            <person name="Sasaki M."/>
            <person name="Togashi T."/>
            <person name="Oyama M."/>
            <person name="Hata H."/>
            <person name="Watanabe M."/>
            <person name="Komatsu T."/>
            <person name="Mizushima-Sugano J."/>
            <person name="Satoh T."/>
            <person name="Shirai Y."/>
            <person name="Takahashi Y."/>
            <person name="Nakagawa K."/>
            <person name="Okumura K."/>
            <person name="Nagase T."/>
            <person name="Nomura N."/>
            <person name="Kikuchi H."/>
            <person name="Masuho Y."/>
            <person name="Yamashita R."/>
            <person name="Nakai K."/>
            <person name="Yada T."/>
            <person name="Nakamura Y."/>
            <person name="Ohara O."/>
            <person name="Isogai T."/>
            <person name="Sugano S."/>
        </authorList>
    </citation>
    <scope>NUCLEOTIDE SEQUENCE [LARGE SCALE MRNA] (ISOFORMS 1 AND 2)</scope>
    <source>
        <tissue>Embryo</tissue>
    </source>
</reference>
<reference key="6">
    <citation type="journal article" date="2006" name="Nature">
        <title>The DNA sequence and biological annotation of human chromosome 1.</title>
        <authorList>
            <person name="Gregory S.G."/>
            <person name="Barlow K.F."/>
            <person name="McLay K.E."/>
            <person name="Kaul R."/>
            <person name="Swarbreck D."/>
            <person name="Dunham A."/>
            <person name="Scott C.E."/>
            <person name="Howe K.L."/>
            <person name="Woodfine K."/>
            <person name="Spencer C.C.A."/>
            <person name="Jones M.C."/>
            <person name="Gillson C."/>
            <person name="Searle S."/>
            <person name="Zhou Y."/>
            <person name="Kokocinski F."/>
            <person name="McDonald L."/>
            <person name="Evans R."/>
            <person name="Phillips K."/>
            <person name="Atkinson A."/>
            <person name="Cooper R."/>
            <person name="Jones C."/>
            <person name="Hall R.E."/>
            <person name="Andrews T.D."/>
            <person name="Lloyd C."/>
            <person name="Ainscough R."/>
            <person name="Almeida J.P."/>
            <person name="Ambrose K.D."/>
            <person name="Anderson F."/>
            <person name="Andrew R.W."/>
            <person name="Ashwell R.I.S."/>
            <person name="Aubin K."/>
            <person name="Babbage A.K."/>
            <person name="Bagguley C.L."/>
            <person name="Bailey J."/>
            <person name="Beasley H."/>
            <person name="Bethel G."/>
            <person name="Bird C.P."/>
            <person name="Bray-Allen S."/>
            <person name="Brown J.Y."/>
            <person name="Brown A.J."/>
            <person name="Buckley D."/>
            <person name="Burton J."/>
            <person name="Bye J."/>
            <person name="Carder C."/>
            <person name="Chapman J.C."/>
            <person name="Clark S.Y."/>
            <person name="Clarke G."/>
            <person name="Clee C."/>
            <person name="Cobley V."/>
            <person name="Collier R.E."/>
            <person name="Corby N."/>
            <person name="Coville G.J."/>
            <person name="Davies J."/>
            <person name="Deadman R."/>
            <person name="Dunn M."/>
            <person name="Earthrowl M."/>
            <person name="Ellington A.G."/>
            <person name="Errington H."/>
            <person name="Frankish A."/>
            <person name="Frankland J."/>
            <person name="French L."/>
            <person name="Garner P."/>
            <person name="Garnett J."/>
            <person name="Gay L."/>
            <person name="Ghori M.R.J."/>
            <person name="Gibson R."/>
            <person name="Gilby L.M."/>
            <person name="Gillett W."/>
            <person name="Glithero R.J."/>
            <person name="Grafham D.V."/>
            <person name="Griffiths C."/>
            <person name="Griffiths-Jones S."/>
            <person name="Grocock R."/>
            <person name="Hammond S."/>
            <person name="Harrison E.S.I."/>
            <person name="Hart E."/>
            <person name="Haugen E."/>
            <person name="Heath P.D."/>
            <person name="Holmes S."/>
            <person name="Holt K."/>
            <person name="Howden P.J."/>
            <person name="Hunt A.R."/>
            <person name="Hunt S.E."/>
            <person name="Hunter G."/>
            <person name="Isherwood J."/>
            <person name="James R."/>
            <person name="Johnson C."/>
            <person name="Johnson D."/>
            <person name="Joy A."/>
            <person name="Kay M."/>
            <person name="Kershaw J.K."/>
            <person name="Kibukawa M."/>
            <person name="Kimberley A.M."/>
            <person name="King A."/>
            <person name="Knights A.J."/>
            <person name="Lad H."/>
            <person name="Laird G."/>
            <person name="Lawlor S."/>
            <person name="Leongamornlert D.A."/>
            <person name="Lloyd D.M."/>
            <person name="Loveland J."/>
            <person name="Lovell J."/>
            <person name="Lush M.J."/>
            <person name="Lyne R."/>
            <person name="Martin S."/>
            <person name="Mashreghi-Mohammadi M."/>
            <person name="Matthews L."/>
            <person name="Matthews N.S.W."/>
            <person name="McLaren S."/>
            <person name="Milne S."/>
            <person name="Mistry S."/>
            <person name="Moore M.J.F."/>
            <person name="Nickerson T."/>
            <person name="O'Dell C.N."/>
            <person name="Oliver K."/>
            <person name="Palmeiri A."/>
            <person name="Palmer S.A."/>
            <person name="Parker A."/>
            <person name="Patel D."/>
            <person name="Pearce A.V."/>
            <person name="Peck A.I."/>
            <person name="Pelan S."/>
            <person name="Phelps K."/>
            <person name="Phillimore B.J."/>
            <person name="Plumb R."/>
            <person name="Rajan J."/>
            <person name="Raymond C."/>
            <person name="Rouse G."/>
            <person name="Saenphimmachak C."/>
            <person name="Sehra H.K."/>
            <person name="Sheridan E."/>
            <person name="Shownkeen R."/>
            <person name="Sims S."/>
            <person name="Skuce C.D."/>
            <person name="Smith M."/>
            <person name="Steward C."/>
            <person name="Subramanian S."/>
            <person name="Sycamore N."/>
            <person name="Tracey A."/>
            <person name="Tromans A."/>
            <person name="Van Helmond Z."/>
            <person name="Wall M."/>
            <person name="Wallis J.M."/>
            <person name="White S."/>
            <person name="Whitehead S.L."/>
            <person name="Wilkinson J.E."/>
            <person name="Willey D.L."/>
            <person name="Williams H."/>
            <person name="Wilming L."/>
            <person name="Wray P.W."/>
            <person name="Wu Z."/>
            <person name="Coulson A."/>
            <person name="Vaudin M."/>
            <person name="Sulston J.E."/>
            <person name="Durbin R.M."/>
            <person name="Hubbard T."/>
            <person name="Wooster R."/>
            <person name="Dunham I."/>
            <person name="Carter N.P."/>
            <person name="McVean G."/>
            <person name="Ross M.T."/>
            <person name="Harrow J."/>
            <person name="Olson M.V."/>
            <person name="Beck S."/>
            <person name="Rogers J."/>
            <person name="Bentley D.R."/>
        </authorList>
    </citation>
    <scope>NUCLEOTIDE SEQUENCE [LARGE SCALE GENOMIC DNA]</scope>
</reference>
<reference key="7">
    <citation type="submission" date="2005-09" db="EMBL/GenBank/DDBJ databases">
        <authorList>
            <person name="Mural R.J."/>
            <person name="Istrail S."/>
            <person name="Sutton G."/>
            <person name="Florea L."/>
            <person name="Halpern A.L."/>
            <person name="Mobarry C.M."/>
            <person name="Lippert R."/>
            <person name="Walenz B."/>
            <person name="Shatkay H."/>
            <person name="Dew I."/>
            <person name="Miller J.R."/>
            <person name="Flanigan M.J."/>
            <person name="Edwards N.J."/>
            <person name="Bolanos R."/>
            <person name="Fasulo D."/>
            <person name="Halldorsson B.V."/>
            <person name="Hannenhalli S."/>
            <person name="Turner R."/>
            <person name="Yooseph S."/>
            <person name="Lu F."/>
            <person name="Nusskern D.R."/>
            <person name="Shue B.C."/>
            <person name="Zheng X.H."/>
            <person name="Zhong F."/>
            <person name="Delcher A.L."/>
            <person name="Huson D.H."/>
            <person name="Kravitz S.A."/>
            <person name="Mouchard L."/>
            <person name="Reinert K."/>
            <person name="Remington K.A."/>
            <person name="Clark A.G."/>
            <person name="Waterman M.S."/>
            <person name="Eichler E.E."/>
            <person name="Adams M.D."/>
            <person name="Hunkapiller M.W."/>
            <person name="Myers E.W."/>
            <person name="Venter J.C."/>
        </authorList>
    </citation>
    <scope>NUCLEOTIDE SEQUENCE [LARGE SCALE GENOMIC DNA]</scope>
</reference>
<reference key="8">
    <citation type="journal article" date="2004" name="Genome Res.">
        <title>The status, quality, and expansion of the NIH full-length cDNA project: the Mammalian Gene Collection (MGC).</title>
        <authorList>
            <consortium name="The MGC Project Team"/>
        </authorList>
    </citation>
    <scope>NUCLEOTIDE SEQUENCE [LARGE SCALE MRNA] (ISOFORM 1)</scope>
</reference>
<reference key="9">
    <citation type="journal article" date="2007" name="BMC Genomics">
        <title>The full-ORF clone resource of the German cDNA consortium.</title>
        <authorList>
            <person name="Bechtel S."/>
            <person name="Rosenfelder H."/>
            <person name="Duda A."/>
            <person name="Schmidt C.P."/>
            <person name="Ernst U."/>
            <person name="Wellenreuther R."/>
            <person name="Mehrle A."/>
            <person name="Schuster C."/>
            <person name="Bahr A."/>
            <person name="Bloecker H."/>
            <person name="Heubner D."/>
            <person name="Hoerlein A."/>
            <person name="Michel G."/>
            <person name="Wedler H."/>
            <person name="Koehrer K."/>
            <person name="Ottenwaelder B."/>
            <person name="Poustka A."/>
            <person name="Wiemann S."/>
            <person name="Schupp I."/>
        </authorList>
    </citation>
    <scope>NUCLEOTIDE SEQUENCE [LARGE SCALE MRNA] OF 930-1393</scope>
    <source>
        <tissue>Testis</tissue>
    </source>
</reference>
<reference key="10">
    <citation type="journal article" date="2008" name="J. Proteome Res.">
        <title>Phosphoproteome of resting human platelets.</title>
        <authorList>
            <person name="Zahedi R.P."/>
            <person name="Lewandrowski U."/>
            <person name="Wiesner J."/>
            <person name="Wortelkamp S."/>
            <person name="Moebius J."/>
            <person name="Schuetz C."/>
            <person name="Walter U."/>
            <person name="Gambaryan S."/>
            <person name="Sickmann A."/>
        </authorList>
    </citation>
    <scope>PHOSPHORYLATION [LARGE SCALE ANALYSIS] AT THR-901</scope>
    <scope>IDENTIFICATION BY MASS SPECTROMETRY [LARGE SCALE ANALYSIS]</scope>
    <source>
        <tissue>Platelet</tissue>
    </source>
</reference>
<reference key="11">
    <citation type="journal article" date="2008" name="Proc. Natl. Acad. Sci. U.S.A.">
        <title>A quantitative atlas of mitotic phosphorylation.</title>
        <authorList>
            <person name="Dephoure N."/>
            <person name="Zhou C."/>
            <person name="Villen J."/>
            <person name="Beausoleil S.A."/>
            <person name="Bakalarski C.E."/>
            <person name="Elledge S.J."/>
            <person name="Gygi S.P."/>
        </authorList>
    </citation>
    <scope>PHOSPHORYLATION [LARGE SCALE ANALYSIS] AT SER-450</scope>
    <scope>IDENTIFICATION BY MASS SPECTROMETRY [LARGE SCALE ANALYSIS]</scope>
    <source>
        <tissue>Cervix carcinoma</tissue>
    </source>
</reference>
<reference key="12">
    <citation type="journal article" date="2010" name="Sci. Signal.">
        <title>Quantitative phosphoproteomics reveals widespread full phosphorylation site occupancy during mitosis.</title>
        <authorList>
            <person name="Olsen J.V."/>
            <person name="Vermeulen M."/>
            <person name="Santamaria A."/>
            <person name="Kumar C."/>
            <person name="Miller M.L."/>
            <person name="Jensen L.J."/>
            <person name="Gnad F."/>
            <person name="Cox J."/>
            <person name="Jensen T.S."/>
            <person name="Nigg E.A."/>
            <person name="Brunak S."/>
            <person name="Mann M."/>
        </authorList>
    </citation>
    <scope>PHOSPHORYLATION [LARGE SCALE ANALYSIS] AT SER-450</scope>
    <scope>IDENTIFICATION BY MASS SPECTROMETRY [LARGE SCALE ANALYSIS]</scope>
    <source>
        <tissue>Cervix carcinoma</tissue>
    </source>
</reference>
<reference key="13">
    <citation type="journal article" date="2011" name="BMC Syst. Biol.">
        <title>Initial characterization of the human central proteome.</title>
        <authorList>
            <person name="Burkard T.R."/>
            <person name="Planyavsky M."/>
            <person name="Kaupe I."/>
            <person name="Breitwieser F.P."/>
            <person name="Buerckstuemmer T."/>
            <person name="Bennett K.L."/>
            <person name="Superti-Furga G."/>
            <person name="Colinge J."/>
        </authorList>
    </citation>
    <scope>IDENTIFICATION BY MASS SPECTROMETRY [LARGE SCALE ANALYSIS]</scope>
</reference>
<reference key="14">
    <citation type="journal article" date="2012" name="Mol. Cell. Proteomics">
        <title>Protein interaction profiling of the p97 adaptor UBXD1 points to a role for the complex in modulating ERGIC-53 trafficking.</title>
        <authorList>
            <person name="Haines D.S."/>
            <person name="Lee J.E."/>
            <person name="Beauparlant S.L."/>
            <person name="Kyle D.B."/>
            <person name="den Besten W."/>
            <person name="Sweredoski M.J."/>
            <person name="Graham R.L."/>
            <person name="Hess S."/>
            <person name="Deshaies R.J."/>
        </authorList>
    </citation>
    <scope>INTERACTION WITH LMAN1</scope>
</reference>
<reference key="15">
    <citation type="journal article" date="2013" name="J. Proteome Res.">
        <title>Toward a comprehensive characterization of a human cancer cell phosphoproteome.</title>
        <authorList>
            <person name="Zhou H."/>
            <person name="Di Palma S."/>
            <person name="Preisinger C."/>
            <person name="Peng M."/>
            <person name="Polat A.N."/>
            <person name="Heck A.J."/>
            <person name="Mohammed S."/>
        </authorList>
    </citation>
    <scope>PHOSPHORYLATION [LARGE SCALE ANALYSIS] AT SER-450 AND SER-916</scope>
    <scope>IDENTIFICATION BY MASS SPECTROMETRY [LARGE SCALE ANALYSIS]</scope>
    <source>
        <tissue>Erythroleukemia</tissue>
    </source>
</reference>
<reference key="16">
    <citation type="journal article" date="2015" name="Proteomics">
        <title>N-terminome analysis of the human mitochondrial proteome.</title>
        <authorList>
            <person name="Vaca Jacome A.S."/>
            <person name="Rabilloud T."/>
            <person name="Schaeffer-Reiss C."/>
            <person name="Rompais M."/>
            <person name="Ayoub D."/>
            <person name="Lane L."/>
            <person name="Bairoch A."/>
            <person name="Van Dorsselaer A."/>
            <person name="Carapito C."/>
        </authorList>
    </citation>
    <scope>IDENTIFICATION BY MASS SPECTROMETRY [LARGE SCALE ANALYSIS]</scope>
</reference>
<reference key="17">
    <citation type="journal article" date="2015" name="Open Biol.">
        <title>Warburg Micro syndrome is caused by RAB18 deficiency or dysregulation.</title>
        <authorList>
            <person name="Handley M.T."/>
            <person name="Carpanini S.M."/>
            <person name="Mali G.R."/>
            <person name="Sidjanin D.J."/>
            <person name="Aligianis I.A."/>
            <person name="Jackson I.J."/>
            <person name="FitzPatrick D.R."/>
        </authorList>
    </citation>
    <scope>FUNCTION</scope>
</reference>
<reference key="18">
    <citation type="journal article" date="2006" name="Am. J. Hum. Genet.">
        <title>Mutation in Rab3 GTPase-activating protein (RAB3GAP) noncatalytic subunit in a kindred with Martsolf syndrome.</title>
        <authorList>
            <person name="Aligianis I.A."/>
            <person name="Morgan N.V."/>
            <person name="Mione M."/>
            <person name="Johnson C.A."/>
            <person name="Rosser E."/>
            <person name="Hennekam R.C.M."/>
            <person name="Adams G."/>
            <person name="Trembath R.C."/>
            <person name="Pilz D.T."/>
            <person name="Stoodley N."/>
            <person name="Moore A.T."/>
            <person name="Wilson S."/>
            <person name="Maher E.R."/>
        </authorList>
    </citation>
    <scope>VARIANT MARTS1 CYS-1052</scope>
</reference>
<reference key="19">
    <citation type="journal article" date="2011" name="Hum. Genet.">
        <title>A homozygous RAB3GAP2 mutation causes Warburg Micro syndrome.</title>
        <authorList>
            <person name="Borck G."/>
            <person name="Wunram H."/>
            <person name="Steiert A."/>
            <person name="Volk A.E."/>
            <person name="Korber F."/>
            <person name="Roters S."/>
            <person name="Herkenrath P."/>
            <person name="Wollnik B."/>
            <person name="Morris-Rosendahl D.J."/>
            <person name="Kubisch C."/>
        </authorList>
    </citation>
    <scope>VARIANT WARBM2 167-PHE--THR-169 DEL</scope>
</reference>
<reference key="20">
    <citation type="journal article" date="2013" name="Hum. Mutat.">
        <title>Mutation spectrum in RAB3GAP1, RAB3GAP2, and RAB18 and genotype-phenotype correlations in Warburg micro syndrome and Martsolf syndrome.</title>
        <authorList>
            <person name="Handley M.T."/>
            <person name="Morris-Rosendahl D.J."/>
            <person name="Brown S."/>
            <person name="Macdonald F."/>
            <person name="Hardy C."/>
            <person name="Bem D."/>
            <person name="Carpanini S.M."/>
            <person name="Borck G."/>
            <person name="Martorell L."/>
            <person name="Izzi C."/>
            <person name="Faravelli F."/>
            <person name="Accorsi P."/>
            <person name="Pinelli L."/>
            <person name="Basel-Vanagaite L."/>
            <person name="Peretz G."/>
            <person name="Abdel-Salam G.M."/>
            <person name="Zaki M.S."/>
            <person name="Jansen A."/>
            <person name="Mowat D."/>
            <person name="Glass I."/>
            <person name="Stewart H."/>
            <person name="Mancini G."/>
            <person name="Lederer D."/>
            <person name="Roscioli T."/>
            <person name="Giuliano F."/>
            <person name="Plomp A.S."/>
            <person name="Rolfs A."/>
            <person name="Graham J.M."/>
            <person name="Seemanova E."/>
            <person name="Poo P."/>
            <person name="Garcia-Cazorla A."/>
            <person name="Edery P."/>
            <person name="Jackson I.J."/>
            <person name="Maher E.R."/>
            <person name="Aligianis I.A."/>
        </authorList>
    </citation>
    <scope>VARIANT MARTS1 CYS-426</scope>
</reference>
<reference key="21">
    <citation type="journal article" date="2014" name="J. Cell Biol.">
        <title>Rab18 and a Rab18 GEF complex are required for normal ER structure.</title>
        <authorList>
            <person name="Gerondopoulos A."/>
            <person name="Bastos R.N."/>
            <person name="Yoshimura S."/>
            <person name="Anderson R."/>
            <person name="Carpanini S."/>
            <person name="Aligianis I."/>
            <person name="Handley M.T."/>
            <person name="Barr F.A."/>
        </authorList>
    </citation>
    <scope>CHARACTERIZATION OF VARIANT MARTS1 CYS-426</scope>
    <scope>FUNCTION</scope>
    <scope>SUBCELLULAR LOCATION</scope>
</reference>
<protein>
    <recommendedName>
        <fullName>Rab3 GTPase-activating protein non-catalytic subunit</fullName>
    </recommendedName>
    <alternativeName>
        <fullName>RGAP-iso</fullName>
    </alternativeName>
    <alternativeName>
        <fullName>Rab3 GTPase-activating protein 150 kDa subunit</fullName>
    </alternativeName>
    <alternativeName>
        <fullName>Rab3-GAP p150</fullName>
        <shortName>Rab3-GAP150</shortName>
    </alternativeName>
    <alternativeName>
        <fullName>Rab3-GAP regulatory subunit</fullName>
    </alternativeName>
</protein>
<feature type="chain" id="PRO_0000191662" description="Rab3 GTPase-activating protein non-catalytic subunit">
    <location>
        <begin position="1"/>
        <end position="1393"/>
    </location>
</feature>
<feature type="region of interest" description="Disordered" evidence="4">
    <location>
        <begin position="36"/>
        <end position="67"/>
    </location>
</feature>
<feature type="compositionally biased region" description="Acidic residues" evidence="4">
    <location>
        <begin position="44"/>
        <end position="64"/>
    </location>
</feature>
<feature type="modified residue" description="Phosphoserine" evidence="3">
    <location>
        <position position="39"/>
    </location>
</feature>
<feature type="modified residue" description="Phosphoserine" evidence="17 18 19">
    <location>
        <position position="450"/>
    </location>
</feature>
<feature type="modified residue" description="Phosphothreonine" evidence="16">
    <location>
        <position position="901"/>
    </location>
</feature>
<feature type="modified residue" description="Phosphoserine" evidence="19">
    <location>
        <position position="916"/>
    </location>
</feature>
<feature type="modified residue" description="Phosphoserine" evidence="2">
    <location>
        <position position="978"/>
    </location>
</feature>
<feature type="splice variant" id="VSP_013311" description="In isoform 2." evidence="12">
    <original>NE</original>
    <variation>VV</variation>
    <location>
        <begin position="205"/>
        <end position="206"/>
    </location>
</feature>
<feature type="splice variant" id="VSP_013312" description="In isoform 2." evidence="12">
    <location>
        <begin position="207"/>
        <end position="1393"/>
    </location>
</feature>
<feature type="sequence variant" id="VAR_066675" description="In WARBM2." evidence="6">
    <location>
        <begin position="167"/>
        <end position="169"/>
    </location>
</feature>
<feature type="sequence variant" id="VAR_086021" description="In MARTS1; abolishes GEF activity towards RAB18; dbSNP:rs587777167." evidence="8 9">
    <original>R</original>
    <variation>C</variation>
    <location>
        <position position="426"/>
    </location>
</feature>
<feature type="sequence variant" id="VAR_021588" description="In dbSNP:rs12045447.">
    <original>T</original>
    <variation>A</variation>
    <location>
        <position position="863"/>
    </location>
</feature>
<feature type="sequence variant" id="VAR_029881" description="In MARTS1; may cause exon skipping; dbSNP:rs121434310." evidence="5">
    <original>G</original>
    <variation>C</variation>
    <location>
        <position position="1052"/>
    </location>
</feature>
<feature type="sequence variant" id="VAR_021589" description="In dbSNP:rs2289189.">
    <original>S</original>
    <variation>T</variation>
    <location>
        <position position="1092"/>
    </location>
</feature>
<feature type="sequence conflict" description="In Ref. 1; AAC35881." evidence="13" ref="1">
    <original>G</original>
    <variation>R</variation>
    <location>
        <position position="289"/>
    </location>
</feature>
<dbReference type="EMBL" id="AF004828">
    <property type="protein sequence ID" value="AAC35881.1"/>
    <property type="molecule type" value="mRNA"/>
</dbReference>
<dbReference type="EMBL" id="AF255648">
    <property type="protein sequence ID" value="AAG44636.1"/>
    <property type="molecule type" value="mRNA"/>
</dbReference>
<dbReference type="EMBL" id="AB020646">
    <property type="protein sequence ID" value="BAA74862.2"/>
    <property type="molecule type" value="mRNA"/>
</dbReference>
<dbReference type="EMBL" id="AK021928">
    <property type="protein sequence ID" value="BAB13939.1"/>
    <property type="molecule type" value="mRNA"/>
</dbReference>
<dbReference type="EMBL" id="AK291234">
    <property type="protein sequence ID" value="BAF83923.1"/>
    <property type="molecule type" value="mRNA"/>
</dbReference>
<dbReference type="EMBL" id="AC103590">
    <property type="status" value="NOT_ANNOTATED_CDS"/>
    <property type="molecule type" value="Genomic_DNA"/>
</dbReference>
<dbReference type="EMBL" id="AL445435">
    <property type="status" value="NOT_ANNOTATED_CDS"/>
    <property type="molecule type" value="Genomic_DNA"/>
</dbReference>
<dbReference type="EMBL" id="CH471100">
    <property type="protein sequence ID" value="EAW93304.1"/>
    <property type="molecule type" value="Genomic_DNA"/>
</dbReference>
<dbReference type="EMBL" id="BC146760">
    <property type="protein sequence ID" value="AAI46761.1"/>
    <property type="molecule type" value="mRNA"/>
</dbReference>
<dbReference type="EMBL" id="AL117631">
    <property type="protein sequence ID" value="CAB56022.1"/>
    <property type="molecule type" value="mRNA"/>
</dbReference>
<dbReference type="CCDS" id="CCDS31028.1">
    <molecule id="Q9H2M9-1"/>
</dbReference>
<dbReference type="PIR" id="T17332">
    <property type="entry name" value="T17332"/>
</dbReference>
<dbReference type="RefSeq" id="NP_036546.2">
    <molecule id="Q9H2M9-1"/>
    <property type="nucleotide sequence ID" value="NM_012414.3"/>
</dbReference>
<dbReference type="PDB" id="8VYB">
    <property type="method" value="EM"/>
    <property type="resolution" value="3.37 A"/>
    <property type="chains" value="B=1-547"/>
</dbReference>
<dbReference type="PDBsum" id="8VYB"/>
<dbReference type="EMDB" id="EMD-43645"/>
<dbReference type="EMDB" id="EMD-43655"/>
<dbReference type="SMR" id="Q9H2M9"/>
<dbReference type="BioGRID" id="117317">
    <property type="interactions" value="158"/>
</dbReference>
<dbReference type="FunCoup" id="Q9H2M9">
    <property type="interactions" value="3171"/>
</dbReference>
<dbReference type="IntAct" id="Q9H2M9">
    <property type="interactions" value="52"/>
</dbReference>
<dbReference type="MINT" id="Q9H2M9"/>
<dbReference type="STRING" id="9606.ENSP00000351832"/>
<dbReference type="GlyGen" id="Q9H2M9">
    <property type="glycosylation" value="1 site, 1 O-linked glycan (1 site)"/>
</dbReference>
<dbReference type="iPTMnet" id="Q9H2M9"/>
<dbReference type="PhosphoSitePlus" id="Q9H2M9"/>
<dbReference type="SwissPalm" id="Q9H2M9"/>
<dbReference type="BioMuta" id="RAB3GAP2"/>
<dbReference type="DMDM" id="62511132"/>
<dbReference type="jPOST" id="Q9H2M9"/>
<dbReference type="MassIVE" id="Q9H2M9"/>
<dbReference type="PaxDb" id="9606-ENSP00000351832"/>
<dbReference type="PeptideAtlas" id="Q9H2M9"/>
<dbReference type="ProteomicsDB" id="80569">
    <molecule id="Q9H2M9-1"/>
</dbReference>
<dbReference type="ProteomicsDB" id="80570">
    <molecule id="Q9H2M9-2"/>
</dbReference>
<dbReference type="Pumba" id="Q9H2M9"/>
<dbReference type="Antibodypedia" id="20736">
    <property type="antibodies" value="123 antibodies from 24 providers"/>
</dbReference>
<dbReference type="DNASU" id="25782"/>
<dbReference type="Ensembl" id="ENST00000358951.7">
    <molecule id="Q9H2M9-1"/>
    <property type="protein sequence ID" value="ENSP00000351832.2"/>
    <property type="gene ID" value="ENSG00000118873.17"/>
</dbReference>
<dbReference type="GeneID" id="25782"/>
<dbReference type="KEGG" id="hsa:25782"/>
<dbReference type="MANE-Select" id="ENST00000358951.7">
    <property type="protein sequence ID" value="ENSP00000351832.2"/>
    <property type="RefSeq nucleotide sequence ID" value="NM_012414.4"/>
    <property type="RefSeq protein sequence ID" value="NP_036546.2"/>
</dbReference>
<dbReference type="UCSC" id="uc057pnr.1">
    <molecule id="Q9H2M9-1"/>
    <property type="organism name" value="human"/>
</dbReference>
<dbReference type="AGR" id="HGNC:17168"/>
<dbReference type="CTD" id="25782"/>
<dbReference type="DisGeNET" id="25782"/>
<dbReference type="GeneCards" id="RAB3GAP2"/>
<dbReference type="GeneReviews" id="RAB3GAP2"/>
<dbReference type="HGNC" id="HGNC:17168">
    <property type="gene designation" value="RAB3GAP2"/>
</dbReference>
<dbReference type="HPA" id="ENSG00000118873">
    <property type="expression patterns" value="Low tissue specificity"/>
</dbReference>
<dbReference type="MalaCards" id="RAB3GAP2"/>
<dbReference type="MIM" id="212720">
    <property type="type" value="phenotype"/>
</dbReference>
<dbReference type="MIM" id="609275">
    <property type="type" value="gene"/>
</dbReference>
<dbReference type="MIM" id="614225">
    <property type="type" value="phenotype"/>
</dbReference>
<dbReference type="neXtProt" id="NX_Q9H2M9"/>
<dbReference type="OpenTargets" id="ENSG00000118873"/>
<dbReference type="Orphanet" id="401830">
    <property type="disease" value="Autosomal recessive spastic paraplegia type 69"/>
</dbReference>
<dbReference type="Orphanet" id="1387">
    <property type="disease" value="Cataract-intellectual disability-hypogonadism syndrome"/>
</dbReference>
<dbReference type="Orphanet" id="2510">
    <property type="disease" value="Micro syndrome"/>
</dbReference>
<dbReference type="PharmGKB" id="PA142671105"/>
<dbReference type="VEuPathDB" id="HostDB:ENSG00000118873"/>
<dbReference type="eggNOG" id="KOG2727">
    <property type="taxonomic scope" value="Eukaryota"/>
</dbReference>
<dbReference type="GeneTree" id="ENSGT00390000005794"/>
<dbReference type="HOGENOM" id="CLU_006591_0_0_1"/>
<dbReference type="InParanoid" id="Q9H2M9"/>
<dbReference type="OMA" id="SWCGELE"/>
<dbReference type="OrthoDB" id="2019917at2759"/>
<dbReference type="PAN-GO" id="Q9H2M9">
    <property type="GO annotations" value="1 GO annotation based on evolutionary models"/>
</dbReference>
<dbReference type="PhylomeDB" id="Q9H2M9"/>
<dbReference type="TreeFam" id="TF314817"/>
<dbReference type="PathwayCommons" id="Q9H2M9"/>
<dbReference type="Reactome" id="R-HSA-6811436">
    <property type="pathway name" value="COPI-independent Golgi-to-ER retrograde traffic"/>
</dbReference>
<dbReference type="Reactome" id="R-HSA-8876198">
    <property type="pathway name" value="RAB GEFs exchange GTP for GDP on RABs"/>
</dbReference>
<dbReference type="SignaLink" id="Q9H2M9"/>
<dbReference type="BioGRID-ORCS" id="25782">
    <property type="hits" value="19 hits in 1154 CRISPR screens"/>
</dbReference>
<dbReference type="CD-CODE" id="FB4E32DD">
    <property type="entry name" value="Presynaptic clusters and postsynaptic densities"/>
</dbReference>
<dbReference type="ChiTaRS" id="RAB3GAP2">
    <property type="organism name" value="human"/>
</dbReference>
<dbReference type="GeneWiki" id="RAB3GAP2"/>
<dbReference type="GenomeRNAi" id="25782"/>
<dbReference type="Pharos" id="Q9H2M9">
    <property type="development level" value="Tbio"/>
</dbReference>
<dbReference type="PRO" id="PR:Q9H2M9"/>
<dbReference type="Proteomes" id="UP000005640">
    <property type="component" value="Chromosome 1"/>
</dbReference>
<dbReference type="RNAct" id="Q9H2M9">
    <property type="molecule type" value="protein"/>
</dbReference>
<dbReference type="Bgee" id="ENSG00000118873">
    <property type="expression patterns" value="Expressed in choroid plexus epithelium and 212 other cell types or tissues"/>
</dbReference>
<dbReference type="ExpressionAtlas" id="Q9H2M9">
    <property type="expression patterns" value="baseline and differential"/>
</dbReference>
<dbReference type="GO" id="GO:0005776">
    <property type="term" value="C:autophagosome"/>
    <property type="evidence" value="ECO:0000318"/>
    <property type="project" value="GO_Central"/>
</dbReference>
<dbReference type="GO" id="GO:0005829">
    <property type="term" value="C:cytosol"/>
    <property type="evidence" value="ECO:0000314"/>
    <property type="project" value="HPA"/>
</dbReference>
<dbReference type="GO" id="GO:0005789">
    <property type="term" value="C:endoplasmic reticulum membrane"/>
    <property type="evidence" value="ECO:0000304"/>
    <property type="project" value="Reactome"/>
</dbReference>
<dbReference type="GO" id="GO:0005886">
    <property type="term" value="C:plasma membrane"/>
    <property type="evidence" value="ECO:0000314"/>
    <property type="project" value="HPA"/>
</dbReference>
<dbReference type="GO" id="GO:0042734">
    <property type="term" value="C:presynaptic membrane"/>
    <property type="evidence" value="ECO:0000318"/>
    <property type="project" value="GO_Central"/>
</dbReference>
<dbReference type="GO" id="GO:0032991">
    <property type="term" value="C:protein-containing complex"/>
    <property type="evidence" value="ECO:0000314"/>
    <property type="project" value="UniProtKB"/>
</dbReference>
<dbReference type="GO" id="GO:0008047">
    <property type="term" value="F:enzyme activator activity"/>
    <property type="evidence" value="ECO:0000304"/>
    <property type="project" value="ProtInc"/>
</dbReference>
<dbReference type="GO" id="GO:0030234">
    <property type="term" value="F:enzyme regulator activity"/>
    <property type="evidence" value="ECO:0000250"/>
    <property type="project" value="UniProtKB"/>
</dbReference>
<dbReference type="GO" id="GO:0005096">
    <property type="term" value="F:GTPase activator activity"/>
    <property type="evidence" value="ECO:0000304"/>
    <property type="project" value="ProtInc"/>
</dbReference>
<dbReference type="GO" id="GO:0031267">
    <property type="term" value="F:small GTPase binding"/>
    <property type="evidence" value="ECO:0000353"/>
    <property type="project" value="UniProtKB"/>
</dbReference>
<dbReference type="GO" id="GO:0097051">
    <property type="term" value="P:establishment of protein localization to endoplasmic reticulum membrane"/>
    <property type="evidence" value="ECO:0000315"/>
    <property type="project" value="UniProtKB"/>
</dbReference>
<dbReference type="GO" id="GO:0006886">
    <property type="term" value="P:intracellular protein transport"/>
    <property type="evidence" value="ECO:0000304"/>
    <property type="project" value="ProtInc"/>
</dbReference>
<dbReference type="GO" id="GO:0016236">
    <property type="term" value="P:macroautophagy"/>
    <property type="evidence" value="ECO:0000318"/>
    <property type="project" value="GO_Central"/>
</dbReference>
<dbReference type="GO" id="GO:2000786">
    <property type="term" value="P:positive regulation of autophagosome assembly"/>
    <property type="evidence" value="ECO:0000315"/>
    <property type="project" value="GO_Central"/>
</dbReference>
<dbReference type="GO" id="GO:1903373">
    <property type="term" value="P:positive regulation of endoplasmic reticulum tubular network organization"/>
    <property type="evidence" value="ECO:0000315"/>
    <property type="project" value="UniProtKB"/>
</dbReference>
<dbReference type="GO" id="GO:1903061">
    <property type="term" value="P:positive regulation of protein lipidation"/>
    <property type="evidence" value="ECO:0000315"/>
    <property type="project" value="GO_Central"/>
</dbReference>
<dbReference type="GO" id="GO:0043087">
    <property type="term" value="P:regulation of GTPase activity"/>
    <property type="evidence" value="ECO:0000250"/>
    <property type="project" value="UniProtKB"/>
</dbReference>
<dbReference type="GO" id="GO:0099536">
    <property type="term" value="P:synaptic signaling"/>
    <property type="evidence" value="ECO:0000318"/>
    <property type="project" value="GO_Central"/>
</dbReference>
<dbReference type="InterPro" id="IPR026059">
    <property type="entry name" value="Rab3GAP2"/>
</dbReference>
<dbReference type="InterPro" id="IPR029257">
    <property type="entry name" value="RAB3GAP2_C"/>
</dbReference>
<dbReference type="InterPro" id="IPR032839">
    <property type="entry name" value="RAB3GAP_N"/>
</dbReference>
<dbReference type="PANTHER" id="PTHR12472:SF0">
    <property type="entry name" value="RAB3 GTPASE-ACTIVATING PROTEIN NON-CATALYTIC SUBUNIT"/>
    <property type="match status" value="1"/>
</dbReference>
<dbReference type="PANTHER" id="PTHR12472">
    <property type="entry name" value="RAB3-GAP REGULATORY DOMAIN"/>
    <property type="match status" value="1"/>
</dbReference>
<dbReference type="Pfam" id="PF14656">
    <property type="entry name" value="RAB3GAP2_C"/>
    <property type="match status" value="1"/>
</dbReference>
<dbReference type="Pfam" id="PF14655">
    <property type="entry name" value="RAB3GAP2_N"/>
    <property type="match status" value="1"/>
</dbReference>
<proteinExistence type="evidence at protein level"/>